<protein>
    <recommendedName>
        <fullName evidence="1">DNA primase</fullName>
        <ecNumber evidence="1">2.7.7.101</ecNumber>
    </recommendedName>
</protein>
<sequence>MVGRIPDRDIAAIRERVCIEEVVGDYVQLRRAGADSLKGLCPFHNEKSPSFHVRPNHGHFHCFGCSEGGDVYAFIQKIEHVSFVEAVEMLADRIGHTINYFGTATSVQRDRGSRSRLIAANAAAAAFYAAALESDEAAPARQYLMERNFDANAARHFGCGFAPSGWDSLTKYLISKGFEFTELEAAGLSRQGRRGPMDRFHRRLLWPILTLAGEVIGFGARRLFDDDPMEAKYVNTPETLLYKKSSVMFGIDLAKRDIVKGHQAVVVEGYTDVMAMHLAGVTTAVASCGTAFGDEHLAMLRRLIMDDNWYRGELIFVFDGDAAGQAAALKAFDGDQQVAGKSFVAVAADGMDPCDLRLSSGDQALRDLVACRKPMFEFAIRSLIPDGMVLDDDPQAKVDALRRSVPLVARIRDYALRDEYARRLAGWTGWSDEGQVLARVREEANRRSVPERTRRRSVSVEQSPFMQPPGAPADQLAARPDPRDPTLWPQREALKSVLQYPVLAGPVFDTLTVESFTHPGYGAVRAAIDAAGGASAGITGAQWIDVVRQQTTSALIAGLINELGVESIQVDDEKLPRYIDGVLARLQEVWMGRQIAEVKSKLQRMSPIDQGDEYHELFGDLVAMEAYRRSLLEQASGDDMTA</sequence>
<reference key="1">
    <citation type="journal article" date="2001" name="Nature">
        <title>Massive gene decay in the leprosy bacillus.</title>
        <authorList>
            <person name="Cole S.T."/>
            <person name="Eiglmeier K."/>
            <person name="Parkhill J."/>
            <person name="James K.D."/>
            <person name="Thomson N.R."/>
            <person name="Wheeler P.R."/>
            <person name="Honore N."/>
            <person name="Garnier T."/>
            <person name="Churcher C.M."/>
            <person name="Harris D.E."/>
            <person name="Mungall K.L."/>
            <person name="Basham D."/>
            <person name="Brown D."/>
            <person name="Chillingworth T."/>
            <person name="Connor R."/>
            <person name="Davies R.M."/>
            <person name="Devlin K."/>
            <person name="Duthoy S."/>
            <person name="Feltwell T."/>
            <person name="Fraser A."/>
            <person name="Hamlin N."/>
            <person name="Holroyd S."/>
            <person name="Hornsby T."/>
            <person name="Jagels K."/>
            <person name="Lacroix C."/>
            <person name="Maclean J."/>
            <person name="Moule S."/>
            <person name="Murphy L.D."/>
            <person name="Oliver K."/>
            <person name="Quail M.A."/>
            <person name="Rajandream M.A."/>
            <person name="Rutherford K.M."/>
            <person name="Rutter S."/>
            <person name="Seeger K."/>
            <person name="Simon S."/>
            <person name="Simmonds M."/>
            <person name="Skelton J."/>
            <person name="Squares R."/>
            <person name="Squares S."/>
            <person name="Stevens K."/>
            <person name="Taylor K."/>
            <person name="Whitehead S."/>
            <person name="Woodward J.R."/>
            <person name="Barrell B.G."/>
        </authorList>
    </citation>
    <scope>NUCLEOTIDE SEQUENCE [LARGE SCALE GENOMIC DNA]</scope>
    <source>
        <strain>TN</strain>
    </source>
</reference>
<name>DNAG_MYCLE</name>
<organism>
    <name type="scientific">Mycobacterium leprae (strain TN)</name>
    <dbReference type="NCBI Taxonomy" id="272631"/>
    <lineage>
        <taxon>Bacteria</taxon>
        <taxon>Bacillati</taxon>
        <taxon>Actinomycetota</taxon>
        <taxon>Actinomycetes</taxon>
        <taxon>Mycobacteriales</taxon>
        <taxon>Mycobacteriaceae</taxon>
        <taxon>Mycobacterium</taxon>
    </lineage>
</organism>
<comment type="function">
    <text evidence="1">RNA polymerase that catalyzes the synthesis of short RNA molecules used as primers for DNA polymerase during DNA replication.</text>
</comment>
<comment type="catalytic activity">
    <reaction evidence="1">
        <text>ssDNA + n NTP = ssDNA/pppN(pN)n-1 hybrid + (n-1) diphosphate.</text>
        <dbReference type="EC" id="2.7.7.101"/>
    </reaction>
</comment>
<comment type="cofactor">
    <cofactor evidence="1">
        <name>Zn(2+)</name>
        <dbReference type="ChEBI" id="CHEBI:29105"/>
    </cofactor>
    <text evidence="1">Binds 1 zinc ion per monomer.</text>
</comment>
<comment type="cofactor">
    <cofactor evidence="1">
        <name>Mg(2+)</name>
        <dbReference type="ChEBI" id="CHEBI:18420"/>
    </cofactor>
    <text evidence="1">Binds two Mg(2+) per subunit.</text>
</comment>
<comment type="subunit">
    <text evidence="1">Monomer. Interacts with DnaB.</text>
</comment>
<comment type="domain">
    <text evidence="1">Contains an N-terminal zinc-binding domain, a central core domain that contains the primase activity, and a C-terminal DnaB-binding domain.</text>
</comment>
<comment type="similarity">
    <text evidence="1">Belongs to the DnaG primase family.</text>
</comment>
<feature type="chain" id="PRO_0000180504" description="DNA primase">
    <location>
        <begin position="1"/>
        <end position="642"/>
    </location>
</feature>
<feature type="domain" description="Toprim" evidence="1">
    <location>
        <begin position="262"/>
        <end position="348"/>
    </location>
</feature>
<feature type="zinc finger region" description="CHC2-type" evidence="1">
    <location>
        <begin position="41"/>
        <end position="65"/>
    </location>
</feature>
<feature type="region of interest" description="Disordered" evidence="2">
    <location>
        <begin position="445"/>
        <end position="480"/>
    </location>
</feature>
<feature type="binding site" evidence="1">
    <location>
        <position position="268"/>
    </location>
    <ligand>
        <name>Mg(2+)</name>
        <dbReference type="ChEBI" id="CHEBI:18420"/>
        <label>1</label>
        <note>catalytic</note>
    </ligand>
</feature>
<feature type="binding site" evidence="1">
    <location>
        <position position="319"/>
    </location>
    <ligand>
        <name>Mg(2+)</name>
        <dbReference type="ChEBI" id="CHEBI:18420"/>
        <label>1</label>
        <note>catalytic</note>
    </ligand>
</feature>
<feature type="binding site" evidence="1">
    <location>
        <position position="319"/>
    </location>
    <ligand>
        <name>Mg(2+)</name>
        <dbReference type="ChEBI" id="CHEBI:18420"/>
        <label>2</label>
    </ligand>
</feature>
<feature type="binding site" evidence="1">
    <location>
        <position position="321"/>
    </location>
    <ligand>
        <name>Mg(2+)</name>
        <dbReference type="ChEBI" id="CHEBI:18420"/>
        <label>2</label>
    </ligand>
</feature>
<accession>Q9CCG2</accession>
<proteinExistence type="inferred from homology"/>
<keyword id="KW-0235">DNA replication</keyword>
<keyword id="KW-0238">DNA-binding</keyword>
<keyword id="KW-0240">DNA-directed RNA polymerase</keyword>
<keyword id="KW-0460">Magnesium</keyword>
<keyword id="KW-0479">Metal-binding</keyword>
<keyword id="KW-0548">Nucleotidyltransferase</keyword>
<keyword id="KW-0639">Primosome</keyword>
<keyword id="KW-1185">Reference proteome</keyword>
<keyword id="KW-0804">Transcription</keyword>
<keyword id="KW-0808">Transferase</keyword>
<keyword id="KW-0862">Zinc</keyword>
<keyword id="KW-0863">Zinc-finger</keyword>
<dbReference type="EC" id="2.7.7.101" evidence="1"/>
<dbReference type="EMBL" id="AL583919">
    <property type="protein sequence ID" value="CAC30343.1"/>
    <property type="molecule type" value="Genomic_DNA"/>
</dbReference>
<dbReference type="PIR" id="C87013">
    <property type="entry name" value="C87013"/>
</dbReference>
<dbReference type="RefSeq" id="NP_301629.1">
    <property type="nucleotide sequence ID" value="NC_002677.1"/>
</dbReference>
<dbReference type="RefSeq" id="WP_010907953.1">
    <property type="nucleotide sequence ID" value="NC_002677.1"/>
</dbReference>
<dbReference type="SMR" id="Q9CCG2"/>
<dbReference type="STRING" id="272631.gene:17574658"/>
<dbReference type="KEGG" id="mle:ML0833"/>
<dbReference type="PATRIC" id="fig|272631.5.peg.1536"/>
<dbReference type="Leproma" id="ML0833"/>
<dbReference type="eggNOG" id="COG0358">
    <property type="taxonomic scope" value="Bacteria"/>
</dbReference>
<dbReference type="HOGENOM" id="CLU_013501_3_1_11"/>
<dbReference type="OrthoDB" id="9803773at2"/>
<dbReference type="Proteomes" id="UP000000806">
    <property type="component" value="Chromosome"/>
</dbReference>
<dbReference type="GO" id="GO:0005737">
    <property type="term" value="C:cytoplasm"/>
    <property type="evidence" value="ECO:0007669"/>
    <property type="project" value="TreeGrafter"/>
</dbReference>
<dbReference type="GO" id="GO:0000428">
    <property type="term" value="C:DNA-directed RNA polymerase complex"/>
    <property type="evidence" value="ECO:0007669"/>
    <property type="project" value="UniProtKB-KW"/>
</dbReference>
<dbReference type="GO" id="GO:1990077">
    <property type="term" value="C:primosome complex"/>
    <property type="evidence" value="ECO:0007669"/>
    <property type="project" value="UniProtKB-KW"/>
</dbReference>
<dbReference type="GO" id="GO:0003677">
    <property type="term" value="F:DNA binding"/>
    <property type="evidence" value="ECO:0007669"/>
    <property type="project" value="UniProtKB-KW"/>
</dbReference>
<dbReference type="GO" id="GO:0003899">
    <property type="term" value="F:DNA-directed RNA polymerase activity"/>
    <property type="evidence" value="ECO:0007669"/>
    <property type="project" value="InterPro"/>
</dbReference>
<dbReference type="GO" id="GO:0008270">
    <property type="term" value="F:zinc ion binding"/>
    <property type="evidence" value="ECO:0007669"/>
    <property type="project" value="UniProtKB-UniRule"/>
</dbReference>
<dbReference type="GO" id="GO:0006269">
    <property type="term" value="P:DNA replication, synthesis of primer"/>
    <property type="evidence" value="ECO:0007669"/>
    <property type="project" value="UniProtKB-UniRule"/>
</dbReference>
<dbReference type="CDD" id="cd03364">
    <property type="entry name" value="TOPRIM_DnaG_primases"/>
    <property type="match status" value="1"/>
</dbReference>
<dbReference type="FunFam" id="3.90.580.10:FF:000001">
    <property type="entry name" value="DNA primase"/>
    <property type="match status" value="1"/>
</dbReference>
<dbReference type="FunFam" id="3.90.980.10:FF:000001">
    <property type="entry name" value="DNA primase"/>
    <property type="match status" value="1"/>
</dbReference>
<dbReference type="Gene3D" id="3.40.1360.10">
    <property type="match status" value="1"/>
</dbReference>
<dbReference type="Gene3D" id="3.90.980.10">
    <property type="entry name" value="DNA primase, catalytic core, N-terminal domain"/>
    <property type="match status" value="1"/>
</dbReference>
<dbReference type="Gene3D" id="3.90.580.10">
    <property type="entry name" value="Zinc finger, CHC2-type domain"/>
    <property type="match status" value="1"/>
</dbReference>
<dbReference type="HAMAP" id="MF_00974">
    <property type="entry name" value="DNA_primase_DnaG"/>
    <property type="match status" value="1"/>
</dbReference>
<dbReference type="InterPro" id="IPR037068">
    <property type="entry name" value="DNA_primase_core_N_sf"/>
</dbReference>
<dbReference type="InterPro" id="IPR019475">
    <property type="entry name" value="DNA_primase_DnaB-bd"/>
</dbReference>
<dbReference type="InterPro" id="IPR006295">
    <property type="entry name" value="DNA_primase_DnaG"/>
</dbReference>
<dbReference type="InterPro" id="IPR013173">
    <property type="entry name" value="DNA_primase_DnaG_DnaB-bd_dom"/>
</dbReference>
<dbReference type="InterPro" id="IPR036977">
    <property type="entry name" value="DNA_primase_Znf_CHC2"/>
</dbReference>
<dbReference type="InterPro" id="IPR030846">
    <property type="entry name" value="DnaG_bac"/>
</dbReference>
<dbReference type="InterPro" id="IPR013264">
    <property type="entry name" value="DNAG_N"/>
</dbReference>
<dbReference type="InterPro" id="IPR050219">
    <property type="entry name" value="DnaG_primase"/>
</dbReference>
<dbReference type="InterPro" id="IPR034151">
    <property type="entry name" value="TOPRIM_DnaG_bac"/>
</dbReference>
<dbReference type="InterPro" id="IPR006171">
    <property type="entry name" value="TOPRIM_dom"/>
</dbReference>
<dbReference type="InterPro" id="IPR002694">
    <property type="entry name" value="Znf_CHC2"/>
</dbReference>
<dbReference type="NCBIfam" id="TIGR01391">
    <property type="entry name" value="dnaG"/>
    <property type="match status" value="1"/>
</dbReference>
<dbReference type="PANTHER" id="PTHR30313">
    <property type="entry name" value="DNA PRIMASE"/>
    <property type="match status" value="1"/>
</dbReference>
<dbReference type="PANTHER" id="PTHR30313:SF2">
    <property type="entry name" value="DNA PRIMASE"/>
    <property type="match status" value="1"/>
</dbReference>
<dbReference type="Pfam" id="PF10410">
    <property type="entry name" value="DnaB_bind"/>
    <property type="match status" value="1"/>
</dbReference>
<dbReference type="Pfam" id="PF08278">
    <property type="entry name" value="DnaG_DnaB_bind"/>
    <property type="match status" value="1"/>
</dbReference>
<dbReference type="Pfam" id="PF08275">
    <property type="entry name" value="DNAG_N"/>
    <property type="match status" value="1"/>
</dbReference>
<dbReference type="Pfam" id="PF13662">
    <property type="entry name" value="Toprim_4"/>
    <property type="match status" value="1"/>
</dbReference>
<dbReference type="Pfam" id="PF01807">
    <property type="entry name" value="Zn_ribbon_DnaG"/>
    <property type="match status" value="1"/>
</dbReference>
<dbReference type="PIRSF" id="PIRSF002811">
    <property type="entry name" value="DnaG"/>
    <property type="match status" value="1"/>
</dbReference>
<dbReference type="SMART" id="SM00766">
    <property type="entry name" value="DnaG_DnaB_bind"/>
    <property type="match status" value="1"/>
</dbReference>
<dbReference type="SMART" id="SM00493">
    <property type="entry name" value="TOPRIM"/>
    <property type="match status" value="1"/>
</dbReference>
<dbReference type="SMART" id="SM00400">
    <property type="entry name" value="ZnF_CHCC"/>
    <property type="match status" value="1"/>
</dbReference>
<dbReference type="SUPFAM" id="SSF56731">
    <property type="entry name" value="DNA primase core"/>
    <property type="match status" value="1"/>
</dbReference>
<dbReference type="SUPFAM" id="SSF57783">
    <property type="entry name" value="Zinc beta-ribbon"/>
    <property type="match status" value="1"/>
</dbReference>
<dbReference type="PROSITE" id="PS50880">
    <property type="entry name" value="TOPRIM"/>
    <property type="match status" value="1"/>
</dbReference>
<evidence type="ECO:0000255" key="1">
    <source>
        <dbReference type="HAMAP-Rule" id="MF_00974"/>
    </source>
</evidence>
<evidence type="ECO:0000256" key="2">
    <source>
        <dbReference type="SAM" id="MobiDB-lite"/>
    </source>
</evidence>
<gene>
    <name evidence="1" type="primary">dnaG</name>
    <name type="ordered locus">ML0833</name>
</gene>